<comment type="function">
    <text evidence="1">Catalyzes the NADPH-dependent reduction of ketopantoate into pantoic acid.</text>
</comment>
<comment type="catalytic activity">
    <reaction>
        <text>(R)-pantoate + NADP(+) = 2-dehydropantoate + NADPH + H(+)</text>
        <dbReference type="Rhea" id="RHEA:16233"/>
        <dbReference type="ChEBI" id="CHEBI:11561"/>
        <dbReference type="ChEBI" id="CHEBI:15378"/>
        <dbReference type="ChEBI" id="CHEBI:15980"/>
        <dbReference type="ChEBI" id="CHEBI:57783"/>
        <dbReference type="ChEBI" id="CHEBI:58349"/>
        <dbReference type="EC" id="1.1.1.169"/>
    </reaction>
</comment>
<comment type="pathway">
    <text>Cofactor biosynthesis; (R)-pantothenate biosynthesis; (R)-pantoate from 3-methyl-2-oxobutanoate: step 2/2.</text>
</comment>
<comment type="similarity">
    <text evidence="2">Belongs to the ketopantoate reductase family.</text>
</comment>
<accession>Q9HDU6</accession>
<gene>
    <name type="ORF">SPBPB2B2.09c</name>
</gene>
<proteinExistence type="inferred from homology"/>
<keyword id="KW-0521">NADP</keyword>
<keyword id="KW-0560">Oxidoreductase</keyword>
<keyword id="KW-0566">Pantothenate biosynthesis</keyword>
<keyword id="KW-1185">Reference proteome</keyword>
<evidence type="ECO:0000250" key="1"/>
<evidence type="ECO:0000305" key="2"/>
<feature type="chain" id="PRO_0000157327" description="Probable 2-dehydropantoate 2-reductase">
    <location>
        <begin position="1"/>
        <end position="350"/>
    </location>
</feature>
<feature type="active site" description="Proton donor" evidence="1">
    <location>
        <position position="213"/>
    </location>
</feature>
<feature type="binding site" evidence="1">
    <location>
        <begin position="9"/>
        <end position="14"/>
    </location>
    <ligand>
        <name>NADP(+)</name>
        <dbReference type="ChEBI" id="CHEBI:58349"/>
    </ligand>
</feature>
<feature type="binding site" evidence="1">
    <location>
        <position position="115"/>
    </location>
    <ligand>
        <name>NADP(+)</name>
        <dbReference type="ChEBI" id="CHEBI:58349"/>
    </ligand>
</feature>
<feature type="binding site" evidence="1">
    <location>
        <position position="115"/>
    </location>
    <ligand>
        <name>substrate</name>
    </ligand>
</feature>
<feature type="binding site" evidence="1">
    <location>
        <position position="217"/>
    </location>
    <ligand>
        <name>substrate</name>
    </ligand>
</feature>
<feature type="binding site" evidence="1">
    <location>
        <position position="221"/>
    </location>
    <ligand>
        <name>substrate</name>
    </ligand>
</feature>
<feature type="binding site" evidence="1">
    <location>
        <position position="295"/>
    </location>
    <ligand>
        <name>substrate</name>
    </ligand>
</feature>
<feature type="binding site" evidence="1">
    <location>
        <position position="307"/>
    </location>
    <ligand>
        <name>NADP(+)</name>
        <dbReference type="ChEBI" id="CHEBI:58349"/>
    </ligand>
</feature>
<protein>
    <recommendedName>
        <fullName>Probable 2-dehydropantoate 2-reductase</fullName>
        <ecNumber>1.1.1.169</ecNumber>
    </recommendedName>
    <alternativeName>
        <fullName>Ketopantoate reductase</fullName>
        <shortName>KPA reductase</shortName>
        <shortName>KPR</shortName>
    </alternativeName>
</protein>
<organism>
    <name type="scientific">Schizosaccharomyces pombe (strain 972 / ATCC 24843)</name>
    <name type="common">Fission yeast</name>
    <dbReference type="NCBI Taxonomy" id="284812"/>
    <lineage>
        <taxon>Eukaryota</taxon>
        <taxon>Fungi</taxon>
        <taxon>Dikarya</taxon>
        <taxon>Ascomycota</taxon>
        <taxon>Taphrinomycotina</taxon>
        <taxon>Schizosaccharomycetes</taxon>
        <taxon>Schizosaccharomycetales</taxon>
        <taxon>Schizosaccharomycetaceae</taxon>
        <taxon>Schizosaccharomyces</taxon>
    </lineage>
</organism>
<sequence>MNNTIYILGAGSIGSLLAYELASLKSINNRVILLLRDKSRVNSFKDKNSTLKIDRLFEENVPHLCCQVTASEPSQLNVQSIENMIVTTKAGQTENALSKYLPYLSKNSNILFVQNGMGAVENVCGKLWPEEQNKPSIYQGVISHGCFQTAPFHFSHAGLGDLKISKVPKNPKKILPDEAAETPCEMIKSLGKSELLRLRYMNYPELLVNQCEKLVINACINPTTATLDCVNGELYNDESAKELFRCIIKECVDIFFKCIPLFKNNEEAEKILNVNRLLDRVMFVGTKVNGANSSSTRQDCLLLRETEIDAINGYVVKLAENNGFQATVNKTMMLLTKSRLGLNRCRAHAR</sequence>
<reference key="1">
    <citation type="journal article" date="2002" name="Nature">
        <title>The genome sequence of Schizosaccharomyces pombe.</title>
        <authorList>
            <person name="Wood V."/>
            <person name="Gwilliam R."/>
            <person name="Rajandream M.A."/>
            <person name="Lyne M.H."/>
            <person name="Lyne R."/>
            <person name="Stewart A."/>
            <person name="Sgouros J.G."/>
            <person name="Peat N."/>
            <person name="Hayles J."/>
            <person name="Baker S.G."/>
            <person name="Basham D."/>
            <person name="Bowman S."/>
            <person name="Brooks K."/>
            <person name="Brown D."/>
            <person name="Brown S."/>
            <person name="Chillingworth T."/>
            <person name="Churcher C.M."/>
            <person name="Collins M."/>
            <person name="Connor R."/>
            <person name="Cronin A."/>
            <person name="Davis P."/>
            <person name="Feltwell T."/>
            <person name="Fraser A."/>
            <person name="Gentles S."/>
            <person name="Goble A."/>
            <person name="Hamlin N."/>
            <person name="Harris D.E."/>
            <person name="Hidalgo J."/>
            <person name="Hodgson G."/>
            <person name="Holroyd S."/>
            <person name="Hornsby T."/>
            <person name="Howarth S."/>
            <person name="Huckle E.J."/>
            <person name="Hunt S."/>
            <person name="Jagels K."/>
            <person name="James K.D."/>
            <person name="Jones L."/>
            <person name="Jones M."/>
            <person name="Leather S."/>
            <person name="McDonald S."/>
            <person name="McLean J."/>
            <person name="Mooney P."/>
            <person name="Moule S."/>
            <person name="Mungall K.L."/>
            <person name="Murphy L.D."/>
            <person name="Niblett D."/>
            <person name="Odell C."/>
            <person name="Oliver K."/>
            <person name="O'Neil S."/>
            <person name="Pearson D."/>
            <person name="Quail M.A."/>
            <person name="Rabbinowitsch E."/>
            <person name="Rutherford K.M."/>
            <person name="Rutter S."/>
            <person name="Saunders D."/>
            <person name="Seeger K."/>
            <person name="Sharp S."/>
            <person name="Skelton J."/>
            <person name="Simmonds M.N."/>
            <person name="Squares R."/>
            <person name="Squares S."/>
            <person name="Stevens K."/>
            <person name="Taylor K."/>
            <person name="Taylor R.G."/>
            <person name="Tivey A."/>
            <person name="Walsh S.V."/>
            <person name="Warren T."/>
            <person name="Whitehead S."/>
            <person name="Woodward J.R."/>
            <person name="Volckaert G."/>
            <person name="Aert R."/>
            <person name="Robben J."/>
            <person name="Grymonprez B."/>
            <person name="Weltjens I."/>
            <person name="Vanstreels E."/>
            <person name="Rieger M."/>
            <person name="Schaefer M."/>
            <person name="Mueller-Auer S."/>
            <person name="Gabel C."/>
            <person name="Fuchs M."/>
            <person name="Duesterhoeft A."/>
            <person name="Fritzc C."/>
            <person name="Holzer E."/>
            <person name="Moestl D."/>
            <person name="Hilbert H."/>
            <person name="Borzym K."/>
            <person name="Langer I."/>
            <person name="Beck A."/>
            <person name="Lehrach H."/>
            <person name="Reinhardt R."/>
            <person name="Pohl T.M."/>
            <person name="Eger P."/>
            <person name="Zimmermann W."/>
            <person name="Wedler H."/>
            <person name="Wambutt R."/>
            <person name="Purnelle B."/>
            <person name="Goffeau A."/>
            <person name="Cadieu E."/>
            <person name="Dreano S."/>
            <person name="Gloux S."/>
            <person name="Lelaure V."/>
            <person name="Mottier S."/>
            <person name="Galibert F."/>
            <person name="Aves S.J."/>
            <person name="Xiang Z."/>
            <person name="Hunt C."/>
            <person name="Moore K."/>
            <person name="Hurst S.M."/>
            <person name="Lucas M."/>
            <person name="Rochet M."/>
            <person name="Gaillardin C."/>
            <person name="Tallada V.A."/>
            <person name="Garzon A."/>
            <person name="Thode G."/>
            <person name="Daga R.R."/>
            <person name="Cruzado L."/>
            <person name="Jimenez J."/>
            <person name="Sanchez M."/>
            <person name="del Rey F."/>
            <person name="Benito J."/>
            <person name="Dominguez A."/>
            <person name="Revuelta J.L."/>
            <person name="Moreno S."/>
            <person name="Armstrong J."/>
            <person name="Forsburg S.L."/>
            <person name="Cerutti L."/>
            <person name="Lowe T."/>
            <person name="McCombie W.R."/>
            <person name="Paulsen I."/>
            <person name="Potashkin J."/>
            <person name="Shpakovski G.V."/>
            <person name="Ussery D."/>
            <person name="Barrell B.G."/>
            <person name="Nurse P."/>
        </authorList>
    </citation>
    <scope>NUCLEOTIDE SEQUENCE [LARGE SCALE GENOMIC DNA]</scope>
    <source>
        <strain>972 / ATCC 24843</strain>
    </source>
</reference>
<dbReference type="EC" id="1.1.1.169"/>
<dbReference type="EMBL" id="CU329671">
    <property type="protein sequence ID" value="CAC21411.1"/>
    <property type="molecule type" value="Genomic_DNA"/>
</dbReference>
<dbReference type="SMR" id="Q9HDU6"/>
<dbReference type="BioGRID" id="277900">
    <property type="interactions" value="52"/>
</dbReference>
<dbReference type="FunCoup" id="Q9HDU6">
    <property type="interactions" value="316"/>
</dbReference>
<dbReference type="STRING" id="284812.Q9HDU6"/>
<dbReference type="PaxDb" id="4896-SPBPB2B2.09c.1"/>
<dbReference type="EnsemblFungi" id="SPBPB2B2.09c.1">
    <property type="protein sequence ID" value="SPBPB2B2.09c.1:pep"/>
    <property type="gene ID" value="SPBPB2B2.09c"/>
</dbReference>
<dbReference type="KEGG" id="spo:2541389"/>
<dbReference type="PomBase" id="SPBPB2B2.09c"/>
<dbReference type="VEuPathDB" id="FungiDB:SPBPB2B2.09c"/>
<dbReference type="eggNOG" id="ENOG502QPT5">
    <property type="taxonomic scope" value="Eukaryota"/>
</dbReference>
<dbReference type="HOGENOM" id="CLU_031468_10_2_1"/>
<dbReference type="InParanoid" id="Q9HDU6"/>
<dbReference type="OMA" id="KFLVNCC"/>
<dbReference type="PhylomeDB" id="Q9HDU6"/>
<dbReference type="UniPathway" id="UPA00028">
    <property type="reaction ID" value="UER00004"/>
</dbReference>
<dbReference type="PRO" id="PR:Q9HDU6"/>
<dbReference type="Proteomes" id="UP000002485">
    <property type="component" value="Chromosome II"/>
</dbReference>
<dbReference type="GO" id="GO:0005737">
    <property type="term" value="C:cytoplasm"/>
    <property type="evidence" value="ECO:0000318"/>
    <property type="project" value="GO_Central"/>
</dbReference>
<dbReference type="GO" id="GO:0005829">
    <property type="term" value="C:cytosol"/>
    <property type="evidence" value="ECO:0007005"/>
    <property type="project" value="PomBase"/>
</dbReference>
<dbReference type="GO" id="GO:0005739">
    <property type="term" value="C:mitochondrion"/>
    <property type="evidence" value="ECO:0000318"/>
    <property type="project" value="GO_Central"/>
</dbReference>
<dbReference type="GO" id="GO:0005634">
    <property type="term" value="C:nucleus"/>
    <property type="evidence" value="ECO:0007005"/>
    <property type="project" value="PomBase"/>
</dbReference>
<dbReference type="GO" id="GO:0008677">
    <property type="term" value="F:2-dehydropantoate 2-reductase activity"/>
    <property type="evidence" value="ECO:0000318"/>
    <property type="project" value="GO_Central"/>
</dbReference>
<dbReference type="GO" id="GO:0050661">
    <property type="term" value="F:NADP binding"/>
    <property type="evidence" value="ECO:0000318"/>
    <property type="project" value="GO_Central"/>
</dbReference>
<dbReference type="GO" id="GO:0015940">
    <property type="term" value="P:pantothenate biosynthetic process"/>
    <property type="evidence" value="ECO:0000250"/>
    <property type="project" value="PomBase"/>
</dbReference>
<dbReference type="FunFam" id="1.10.1040.10:FF:000047">
    <property type="entry name" value="2-dehydropantoate 2-reductase"/>
    <property type="match status" value="1"/>
</dbReference>
<dbReference type="Gene3D" id="1.10.1040.10">
    <property type="entry name" value="N-(1-d-carboxylethyl)-l-norvaline Dehydrogenase, domain 2"/>
    <property type="match status" value="1"/>
</dbReference>
<dbReference type="Gene3D" id="3.40.50.720">
    <property type="entry name" value="NAD(P)-binding Rossmann-like Domain"/>
    <property type="match status" value="1"/>
</dbReference>
<dbReference type="InterPro" id="IPR008927">
    <property type="entry name" value="6-PGluconate_DH-like_C_sf"/>
</dbReference>
<dbReference type="InterPro" id="IPR013328">
    <property type="entry name" value="6PGD_dom2"/>
</dbReference>
<dbReference type="InterPro" id="IPR003710">
    <property type="entry name" value="ApbA"/>
</dbReference>
<dbReference type="InterPro" id="IPR050838">
    <property type="entry name" value="Ketopantoate_reductase"/>
</dbReference>
<dbReference type="InterPro" id="IPR013752">
    <property type="entry name" value="KPA_reductase"/>
</dbReference>
<dbReference type="InterPro" id="IPR013332">
    <property type="entry name" value="KPR_N"/>
</dbReference>
<dbReference type="InterPro" id="IPR036291">
    <property type="entry name" value="NAD(P)-bd_dom_sf"/>
</dbReference>
<dbReference type="NCBIfam" id="TIGR00745">
    <property type="entry name" value="apbA_panE"/>
    <property type="match status" value="1"/>
</dbReference>
<dbReference type="PANTHER" id="PTHR43765:SF2">
    <property type="entry name" value="2-DEHYDROPANTOATE 2-REDUCTASE"/>
    <property type="match status" value="1"/>
</dbReference>
<dbReference type="PANTHER" id="PTHR43765">
    <property type="entry name" value="2-DEHYDROPANTOATE 2-REDUCTASE-RELATED"/>
    <property type="match status" value="1"/>
</dbReference>
<dbReference type="Pfam" id="PF02558">
    <property type="entry name" value="ApbA"/>
    <property type="match status" value="1"/>
</dbReference>
<dbReference type="Pfam" id="PF08546">
    <property type="entry name" value="ApbA_C"/>
    <property type="match status" value="1"/>
</dbReference>
<dbReference type="SUPFAM" id="SSF48179">
    <property type="entry name" value="6-phosphogluconate dehydrogenase C-terminal domain-like"/>
    <property type="match status" value="1"/>
</dbReference>
<dbReference type="SUPFAM" id="SSF51735">
    <property type="entry name" value="NAD(P)-binding Rossmann-fold domains"/>
    <property type="match status" value="1"/>
</dbReference>
<name>PANE_SCHPO</name>